<sequence length="94" mass="10380">MTKRTKKVGVTGKYGVRYGASLRRDVRKIEVQQHSRYQCPFCGRLTVKRTAAGIWKCSGKGCSKTLAGGAWTVTTAAATSARSTIRRLREMVEV</sequence>
<reference key="1">
    <citation type="journal article" date="2002" name="Nature">
        <title>The genome sequence of Schizosaccharomyces pombe.</title>
        <authorList>
            <person name="Wood V."/>
            <person name="Gwilliam R."/>
            <person name="Rajandream M.A."/>
            <person name="Lyne M.H."/>
            <person name="Lyne R."/>
            <person name="Stewart A."/>
            <person name="Sgouros J.G."/>
            <person name="Peat N."/>
            <person name="Hayles J."/>
            <person name="Baker S.G."/>
            <person name="Basham D."/>
            <person name="Bowman S."/>
            <person name="Brooks K."/>
            <person name="Brown D."/>
            <person name="Brown S."/>
            <person name="Chillingworth T."/>
            <person name="Churcher C.M."/>
            <person name="Collins M."/>
            <person name="Connor R."/>
            <person name="Cronin A."/>
            <person name="Davis P."/>
            <person name="Feltwell T."/>
            <person name="Fraser A."/>
            <person name="Gentles S."/>
            <person name="Goble A."/>
            <person name="Hamlin N."/>
            <person name="Harris D.E."/>
            <person name="Hidalgo J."/>
            <person name="Hodgson G."/>
            <person name="Holroyd S."/>
            <person name="Hornsby T."/>
            <person name="Howarth S."/>
            <person name="Huckle E.J."/>
            <person name="Hunt S."/>
            <person name="Jagels K."/>
            <person name="James K.D."/>
            <person name="Jones L."/>
            <person name="Jones M."/>
            <person name="Leather S."/>
            <person name="McDonald S."/>
            <person name="McLean J."/>
            <person name="Mooney P."/>
            <person name="Moule S."/>
            <person name="Mungall K.L."/>
            <person name="Murphy L.D."/>
            <person name="Niblett D."/>
            <person name="Odell C."/>
            <person name="Oliver K."/>
            <person name="O'Neil S."/>
            <person name="Pearson D."/>
            <person name="Quail M.A."/>
            <person name="Rabbinowitsch E."/>
            <person name="Rutherford K.M."/>
            <person name="Rutter S."/>
            <person name="Saunders D."/>
            <person name="Seeger K."/>
            <person name="Sharp S."/>
            <person name="Skelton J."/>
            <person name="Simmonds M.N."/>
            <person name="Squares R."/>
            <person name="Squares S."/>
            <person name="Stevens K."/>
            <person name="Taylor K."/>
            <person name="Taylor R.G."/>
            <person name="Tivey A."/>
            <person name="Walsh S.V."/>
            <person name="Warren T."/>
            <person name="Whitehead S."/>
            <person name="Woodward J.R."/>
            <person name="Volckaert G."/>
            <person name="Aert R."/>
            <person name="Robben J."/>
            <person name="Grymonprez B."/>
            <person name="Weltjens I."/>
            <person name="Vanstreels E."/>
            <person name="Rieger M."/>
            <person name="Schaefer M."/>
            <person name="Mueller-Auer S."/>
            <person name="Gabel C."/>
            <person name="Fuchs M."/>
            <person name="Duesterhoeft A."/>
            <person name="Fritzc C."/>
            <person name="Holzer E."/>
            <person name="Moestl D."/>
            <person name="Hilbert H."/>
            <person name="Borzym K."/>
            <person name="Langer I."/>
            <person name="Beck A."/>
            <person name="Lehrach H."/>
            <person name="Reinhardt R."/>
            <person name="Pohl T.M."/>
            <person name="Eger P."/>
            <person name="Zimmermann W."/>
            <person name="Wedler H."/>
            <person name="Wambutt R."/>
            <person name="Purnelle B."/>
            <person name="Goffeau A."/>
            <person name="Cadieu E."/>
            <person name="Dreano S."/>
            <person name="Gloux S."/>
            <person name="Lelaure V."/>
            <person name="Mottier S."/>
            <person name="Galibert F."/>
            <person name="Aves S.J."/>
            <person name="Xiang Z."/>
            <person name="Hunt C."/>
            <person name="Moore K."/>
            <person name="Hurst S.M."/>
            <person name="Lucas M."/>
            <person name="Rochet M."/>
            <person name="Gaillardin C."/>
            <person name="Tallada V.A."/>
            <person name="Garzon A."/>
            <person name="Thode G."/>
            <person name="Daga R.R."/>
            <person name="Cruzado L."/>
            <person name="Jimenez J."/>
            <person name="Sanchez M."/>
            <person name="del Rey F."/>
            <person name="Benito J."/>
            <person name="Dominguez A."/>
            <person name="Revuelta J.L."/>
            <person name="Moreno S."/>
            <person name="Armstrong J."/>
            <person name="Forsburg S.L."/>
            <person name="Cerutti L."/>
            <person name="Lowe T."/>
            <person name="McCombie W.R."/>
            <person name="Paulsen I."/>
            <person name="Potashkin J."/>
            <person name="Shpakovski G.V."/>
            <person name="Ussery D."/>
            <person name="Barrell B.G."/>
            <person name="Nurse P."/>
        </authorList>
    </citation>
    <scope>NUCLEOTIDE SEQUENCE [LARGE SCALE GENOMIC DNA]</scope>
    <source>
        <strain>972 / ATCC 24843</strain>
    </source>
</reference>
<reference key="2">
    <citation type="submission" date="1997-07" db="EMBL/GenBank/DDBJ databases">
        <title>S.pombe ribosomal protein L37 homolog.</title>
        <authorList>
            <person name="Kawamukai M."/>
        </authorList>
    </citation>
    <scope>NUCLEOTIDE SEQUENCE [MRNA] OF 10-94</scope>
</reference>
<reference key="3">
    <citation type="journal article" date="2006" name="Nat. Biotechnol.">
        <title>ORFeome cloning and global analysis of protein localization in the fission yeast Schizosaccharomyces pombe.</title>
        <authorList>
            <person name="Matsuyama A."/>
            <person name="Arai R."/>
            <person name="Yashiroda Y."/>
            <person name="Shirai A."/>
            <person name="Kamata A."/>
            <person name="Sekido S."/>
            <person name="Kobayashi Y."/>
            <person name="Hashimoto A."/>
            <person name="Hamamoto M."/>
            <person name="Hiraoka Y."/>
            <person name="Horinouchi S."/>
            <person name="Yoshida M."/>
        </authorList>
    </citation>
    <scope>SUBCELLULAR LOCATION [LARGE SCALE ANALYSIS]</scope>
</reference>
<comment type="function">
    <text evidence="1">Component of the ribosome, a large ribonucleoprotein complex responsible for the synthesis of proteins in the cell. The small ribosomal subunit (SSU) binds messenger RNAs (mRNAs) and translates the encoded message by selecting cognate aminoacyl-transfer RNA (tRNA) molecules. The large subunit (LSU) contains the ribosomal catalytic site termed the peptidyl transferase center (PTC), which catalyzes the formation of peptide bonds, thereby polymerizing the amino acids delivered by tRNAs into a polypeptide chain. The nascent polypeptides leave the ribosome through a tunnel in the LSU and interact with protein factors that function in enzymatic processing, targeting, and the membrane insertion of nascent chains at the exit of the ribosomal tunnel.</text>
</comment>
<comment type="subunit">
    <text evidence="1">Component of the large ribosomal subunit (LSU). Mature yeast ribosomes consist of a small (40S) and a large (60S) subunit. The 40S small subunit contains 1 molecule of ribosomal RNA (18S rRNA) and at least 33 different proteins. The large 60S subunit contains 3 rRNA molecules (25S, 5.8S and 5S rRNA) and at least 46 different proteins.</text>
</comment>
<comment type="subcellular location">
    <subcellularLocation>
        <location evidence="2">Cytoplasm</location>
    </subcellularLocation>
</comment>
<comment type="miscellaneous">
    <text>There are 2 genes for eL43 in S.pombe.</text>
</comment>
<comment type="similarity">
    <text evidence="3">Belongs to the eukaryotic ribosomal protein eL43 family.</text>
</comment>
<organism>
    <name type="scientific">Schizosaccharomyces pombe (strain 972 / ATCC 24843)</name>
    <name type="common">Fission yeast</name>
    <dbReference type="NCBI Taxonomy" id="284812"/>
    <lineage>
        <taxon>Eukaryota</taxon>
        <taxon>Fungi</taxon>
        <taxon>Dikarya</taxon>
        <taxon>Ascomycota</taxon>
        <taxon>Taphrinomycotina</taxon>
        <taxon>Schizosaccharomycetes</taxon>
        <taxon>Schizosaccharomycetales</taxon>
        <taxon>Schizosaccharomycetaceae</taxon>
        <taxon>Schizosaccharomyces</taxon>
    </lineage>
</organism>
<keyword id="KW-0963">Cytoplasm</keyword>
<keyword id="KW-0479">Metal-binding</keyword>
<keyword id="KW-1185">Reference proteome</keyword>
<keyword id="KW-0687">Ribonucleoprotein</keyword>
<keyword id="KW-0689">Ribosomal protein</keyword>
<keyword id="KW-0862">Zinc</keyword>
<keyword id="KW-0863">Zinc-finger</keyword>
<gene>
    <name type="primary">rpl4302</name>
    <name type="synonym">rpl43</name>
    <name type="synonym">rpl43b</name>
    <name type="ORF">SPBC83.02c</name>
</gene>
<accession>O94686</accession>
<accession>O13673</accession>
<proteinExistence type="inferred from homology"/>
<feature type="chain" id="PRO_0000139837" description="Large ribosomal subunit protein eL43B">
    <location>
        <begin position="1"/>
        <end position="94"/>
    </location>
</feature>
<feature type="zinc finger region" description="C4-type">
    <location>
        <begin position="39"/>
        <end position="62"/>
    </location>
</feature>
<feature type="sequence conflict" description="In Ref. 2; BAA21635." evidence="3" ref="2">
    <original>VT</original>
    <variation>MP</variation>
    <location>
        <begin position="10"/>
        <end position="11"/>
    </location>
</feature>
<protein>
    <recommendedName>
        <fullName evidence="3">Large ribosomal subunit protein eL43B</fullName>
    </recommendedName>
    <alternativeName>
        <fullName>60S ribosomal protein L43-B</fullName>
    </alternativeName>
    <alternativeName>
        <fullName>L37B</fullName>
    </alternativeName>
</protein>
<evidence type="ECO:0000250" key="1">
    <source>
        <dbReference type="UniProtKB" id="P0CX26"/>
    </source>
</evidence>
<evidence type="ECO:0000269" key="2">
    <source>
    </source>
</evidence>
<evidence type="ECO:0000305" key="3"/>
<name>RL43B_SCHPO</name>
<dbReference type="EMBL" id="AB005904">
    <property type="protein sequence ID" value="BAA21635.1"/>
    <property type="molecule type" value="mRNA"/>
</dbReference>
<dbReference type="EMBL" id="CU329671">
    <property type="protein sequence ID" value="CAB36864.1"/>
    <property type="molecule type" value="Genomic_DNA"/>
</dbReference>
<dbReference type="PIR" id="T40691">
    <property type="entry name" value="T40691"/>
</dbReference>
<dbReference type="RefSeq" id="NP_595634.1">
    <property type="nucleotide sequence ID" value="NM_001021528.2"/>
</dbReference>
<dbReference type="SMR" id="O94686"/>
<dbReference type="BioGRID" id="277190">
    <property type="interactions" value="61"/>
</dbReference>
<dbReference type="FunCoup" id="O94686">
    <property type="interactions" value="549"/>
</dbReference>
<dbReference type="STRING" id="284812.O94686"/>
<dbReference type="iPTMnet" id="O94686"/>
<dbReference type="PaxDb" id="4896-SPBC83.02c.1"/>
<dbReference type="EnsemblFungi" id="SPBC83.02c.1">
    <property type="protein sequence ID" value="SPBC83.02c.1:pep"/>
    <property type="gene ID" value="SPBC83.02c"/>
</dbReference>
<dbReference type="GeneID" id="2540665"/>
<dbReference type="KEGG" id="spo:2540665"/>
<dbReference type="PomBase" id="SPBC83.02c">
    <property type="gene designation" value="rpl4302"/>
</dbReference>
<dbReference type="VEuPathDB" id="FungiDB:SPBC83.02c"/>
<dbReference type="eggNOG" id="KOG0402">
    <property type="taxonomic scope" value="Eukaryota"/>
</dbReference>
<dbReference type="HOGENOM" id="CLU_141199_1_0_1"/>
<dbReference type="InParanoid" id="O94686"/>
<dbReference type="OMA" id="EAMKRTC"/>
<dbReference type="PRO" id="PR:O94686"/>
<dbReference type="Proteomes" id="UP000002485">
    <property type="component" value="Chromosome II"/>
</dbReference>
<dbReference type="GO" id="GO:0005829">
    <property type="term" value="C:cytosol"/>
    <property type="evidence" value="ECO:0007005"/>
    <property type="project" value="PomBase"/>
</dbReference>
<dbReference type="GO" id="GO:0022625">
    <property type="term" value="C:cytosolic large ribosomal subunit"/>
    <property type="evidence" value="ECO:0000318"/>
    <property type="project" value="GO_Central"/>
</dbReference>
<dbReference type="GO" id="GO:0003735">
    <property type="term" value="F:structural constituent of ribosome"/>
    <property type="evidence" value="ECO:0000266"/>
    <property type="project" value="PomBase"/>
</dbReference>
<dbReference type="GO" id="GO:0008270">
    <property type="term" value="F:zinc ion binding"/>
    <property type="evidence" value="ECO:0007669"/>
    <property type="project" value="UniProtKB-KW"/>
</dbReference>
<dbReference type="GO" id="GO:0002181">
    <property type="term" value="P:cytoplasmic translation"/>
    <property type="evidence" value="ECO:0000266"/>
    <property type="project" value="PomBase"/>
</dbReference>
<dbReference type="FunFam" id="2.20.25.30:FF:000002">
    <property type="entry name" value="60S ribosomal protein L37a"/>
    <property type="match status" value="1"/>
</dbReference>
<dbReference type="Gene3D" id="2.20.25.30">
    <property type="match status" value="1"/>
</dbReference>
<dbReference type="HAMAP" id="MF_00327">
    <property type="entry name" value="Ribosomal_eL43"/>
    <property type="match status" value="1"/>
</dbReference>
<dbReference type="InterPro" id="IPR011331">
    <property type="entry name" value="Ribosomal_eL37/eL43"/>
</dbReference>
<dbReference type="InterPro" id="IPR002674">
    <property type="entry name" value="Ribosomal_eL43"/>
</dbReference>
<dbReference type="InterPro" id="IPR050522">
    <property type="entry name" value="Ribosomal_protein_eL43"/>
</dbReference>
<dbReference type="InterPro" id="IPR011332">
    <property type="entry name" value="Ribosomal_zn-bd"/>
</dbReference>
<dbReference type="NCBIfam" id="TIGR00280">
    <property type="entry name" value="eL43_euk_arch"/>
    <property type="match status" value="1"/>
</dbReference>
<dbReference type="NCBIfam" id="NF003058">
    <property type="entry name" value="PRK03976.1"/>
    <property type="match status" value="1"/>
</dbReference>
<dbReference type="PANTHER" id="PTHR48129">
    <property type="entry name" value="60S RIBOSOMAL PROTEIN L37A"/>
    <property type="match status" value="1"/>
</dbReference>
<dbReference type="PANTHER" id="PTHR48129:SF1">
    <property type="entry name" value="LARGE RIBOSOMAL SUBUNIT PROTEIN EL43"/>
    <property type="match status" value="1"/>
</dbReference>
<dbReference type="Pfam" id="PF01780">
    <property type="entry name" value="Ribosomal_L37ae"/>
    <property type="match status" value="1"/>
</dbReference>
<dbReference type="SUPFAM" id="SSF57829">
    <property type="entry name" value="Zn-binding ribosomal proteins"/>
    <property type="match status" value="1"/>
</dbReference>